<accession>P30570</accession>
<feature type="initiator methionine" description="Removed" evidence="1">
    <location>
        <position position="1"/>
    </location>
</feature>
<feature type="chain" id="PRO_0000197427" description="EC protein III">
    <location>
        <begin position="2"/>
        <end position="81"/>
    </location>
</feature>
<proteinExistence type="evidence at transcript level"/>
<keyword id="KW-0479">Metal-binding</keyword>
<keyword id="KW-0480">Metal-thiolate cluster</keyword>
<keyword id="KW-1185">Reference proteome</keyword>
<keyword id="KW-0862">Zinc</keyword>
<name>EC3_WHEAT</name>
<organism>
    <name type="scientific">Triticum aestivum</name>
    <name type="common">Wheat</name>
    <dbReference type="NCBI Taxonomy" id="4565"/>
    <lineage>
        <taxon>Eukaryota</taxon>
        <taxon>Viridiplantae</taxon>
        <taxon>Streptophyta</taxon>
        <taxon>Embryophyta</taxon>
        <taxon>Tracheophyta</taxon>
        <taxon>Spermatophyta</taxon>
        <taxon>Magnoliopsida</taxon>
        <taxon>Liliopsida</taxon>
        <taxon>Poales</taxon>
        <taxon>Poaceae</taxon>
        <taxon>BOP clade</taxon>
        <taxon>Pooideae</taxon>
        <taxon>Triticodae</taxon>
        <taxon>Triticeae</taxon>
        <taxon>Triticinae</taxon>
        <taxon>Triticum</taxon>
    </lineage>
</organism>
<reference key="1">
    <citation type="journal article" date="1992" name="Eur. J. Biochem.">
        <title>Wheat Ec metallothionein genes. Like mammalian Zn2+ metallothionein genes, wheat Zn2+ metallothionein genes are conspicuously expressed during embryogenesis.</title>
        <authorList>
            <person name="Kawashima I."/>
            <person name="Kennedy T.D."/>
            <person name="Chino M."/>
            <person name="Lane B.G."/>
        </authorList>
    </citation>
    <scope>NUCLEOTIDE SEQUENCE [GENOMIC DNA / MRNA]</scope>
    <source>
        <strain>cv. Neepawa</strain>
        <strain>cv. Yamhill</strain>
        <tissue>Embryo</tissue>
    </source>
</reference>
<sequence>MGCNDKCGCAVPCPGGTGCRCTSARSDAAAGEHTTCGCGEHCGCNPCACGREGTPSGRANRRANCSCGAACNCASCGSTTA</sequence>
<dbReference type="EMBL" id="X68291">
    <property type="protein sequence ID" value="CAA48351.1"/>
    <property type="molecule type" value="mRNA"/>
</dbReference>
<dbReference type="EMBL" id="X68288">
    <property type="protein sequence ID" value="CAA48348.1"/>
    <property type="molecule type" value="Genomic_DNA"/>
</dbReference>
<dbReference type="PIR" id="S27366">
    <property type="entry name" value="S27366"/>
</dbReference>
<dbReference type="RefSeq" id="NP_001392718.1">
    <property type="nucleotide sequence ID" value="NM_001405789.1"/>
</dbReference>
<dbReference type="BMRB" id="P30570"/>
<dbReference type="SMR" id="P30570"/>
<dbReference type="STRING" id="4565.P30570"/>
<dbReference type="PaxDb" id="4565-Traes_1AL_F0648088C.1"/>
<dbReference type="EnsemblPlants" id="TraesARI1A03G00099630.1">
    <property type="protein sequence ID" value="TraesARI1A03G00099630.1.CDS1"/>
    <property type="gene ID" value="TraesARI1A03G00099630"/>
</dbReference>
<dbReference type="EnsemblPlants" id="TraesCAD_scaffold_049088_01G000200.1">
    <property type="protein sequence ID" value="TraesCAD_scaffold_049088_01G000200.1"/>
    <property type="gene ID" value="TraesCAD_scaffold_049088_01G000200"/>
</dbReference>
<dbReference type="EnsemblPlants" id="TraesCLE_scaffold_069800_01G000100.1">
    <property type="protein sequence ID" value="TraesCLE_scaffold_069800_01G000100.1"/>
    <property type="gene ID" value="TraesCLE_scaffold_069800_01G000100"/>
</dbReference>
<dbReference type="EnsemblPlants" id="TraesCS1A02G202900.1">
    <property type="protein sequence ID" value="TraesCS1A02G202900.1.cds1"/>
    <property type="gene ID" value="TraesCS1A02G202900"/>
</dbReference>
<dbReference type="EnsemblPlants" id="TraesCS1A03G0541000.1">
    <property type="protein sequence ID" value="TraesCS1A03G0541000.1.CDS1"/>
    <property type="gene ID" value="TraesCS1A03G0541000"/>
</dbReference>
<dbReference type="EnsemblPlants" id="TraesJAG1A03G00097830.1">
    <property type="protein sequence ID" value="TraesJAG1A03G00097830.1.CDS1"/>
    <property type="gene ID" value="TraesJAG1A03G00097830"/>
</dbReference>
<dbReference type="EnsemblPlants" id="TraesJUL1A03G00097270.1">
    <property type="protein sequence ID" value="TraesJUL1A03G00097270.1.CDS1"/>
    <property type="gene ID" value="TraesJUL1A03G00097270"/>
</dbReference>
<dbReference type="EnsemblPlants" id="TraesKAR1A01G0230670.1">
    <property type="protein sequence ID" value="cds.TraesKAR1A01G0230670.1"/>
    <property type="gene ID" value="TraesKAR1A01G0230670"/>
</dbReference>
<dbReference type="EnsemblPlants" id="TraesLAC1A03G00100340.1">
    <property type="protein sequence ID" value="TraesLAC1A03G00100340.1.CDS1"/>
    <property type="gene ID" value="TraesLAC1A03G00100340"/>
</dbReference>
<dbReference type="EnsemblPlants" id="TraesLDM1A03G00097970.1">
    <property type="protein sequence ID" value="TraesLDM1A03G00097970.1.CDS1"/>
    <property type="gene ID" value="TraesLDM1A03G00097970"/>
</dbReference>
<dbReference type="EnsemblPlants" id="TraesMAC1A03G00099350.1">
    <property type="protein sequence ID" value="TraesMAC1A03G00099350.1.CDS1"/>
    <property type="gene ID" value="TraesMAC1A03G00099350"/>
</dbReference>
<dbReference type="EnsemblPlants" id="TraesNOR1A03G00098560.1">
    <property type="protein sequence ID" value="TraesNOR1A03G00098560.1.CDS1"/>
    <property type="gene ID" value="TraesNOR1A03G00098560"/>
</dbReference>
<dbReference type="EnsemblPlants" id="TraesPARA_EIv1.0_0051460.1">
    <property type="protein sequence ID" value="TraesPARA_EIv1.0_0051460.1.CDS1"/>
    <property type="gene ID" value="TraesPARA_EIv1.0_0051460"/>
</dbReference>
<dbReference type="EnsemblPlants" id="TraesRN1A0100582500.1">
    <property type="protein sequence ID" value="TraesRN1A0100582500.1"/>
    <property type="gene ID" value="TraesRN1A0100582500"/>
</dbReference>
<dbReference type="EnsemblPlants" id="TraesROB_scaffold_048024_01G000100.1">
    <property type="protein sequence ID" value="TraesROB_scaffold_048024_01G000100.1"/>
    <property type="gene ID" value="TraesROB_scaffold_048024_01G000100"/>
</dbReference>
<dbReference type="EnsemblPlants" id="TraesSTA1A03G00098130.1">
    <property type="protein sequence ID" value="TraesSTA1A03G00098130.1.CDS1"/>
    <property type="gene ID" value="TraesSTA1A03G00098130"/>
</dbReference>
<dbReference type="EnsemblPlants" id="TraesSYM1A03G00100910.1">
    <property type="protein sequence ID" value="TraesSYM1A03G00100910.1.CDS1"/>
    <property type="gene ID" value="TraesSYM1A03G00100910"/>
</dbReference>
<dbReference type="EnsemblPlants" id="TraesWEE_scaffold_032102_01G000300.1">
    <property type="protein sequence ID" value="TraesWEE_scaffold_032102_01G000300.1"/>
    <property type="gene ID" value="TraesWEE_scaffold_032102_01G000300"/>
</dbReference>
<dbReference type="GeneID" id="543366"/>
<dbReference type="Gramene" id="TraesARI1A03G00099630.1">
    <property type="protein sequence ID" value="TraesARI1A03G00099630.1.CDS1"/>
    <property type="gene ID" value="TraesARI1A03G00099630"/>
</dbReference>
<dbReference type="Gramene" id="TraesCAD_scaffold_049088_01G000200.1">
    <property type="protein sequence ID" value="TraesCAD_scaffold_049088_01G000200.1"/>
    <property type="gene ID" value="TraesCAD_scaffold_049088_01G000200"/>
</dbReference>
<dbReference type="Gramene" id="TraesCLE_scaffold_069800_01G000100.1">
    <property type="protein sequence ID" value="TraesCLE_scaffold_069800_01G000100.1"/>
    <property type="gene ID" value="TraesCLE_scaffold_069800_01G000100"/>
</dbReference>
<dbReference type="Gramene" id="TraesCS1A02G202900.1">
    <property type="protein sequence ID" value="TraesCS1A02G202900.1.cds1"/>
    <property type="gene ID" value="TraesCS1A02G202900"/>
</dbReference>
<dbReference type="Gramene" id="TraesCS1A03G0541000.1">
    <property type="protein sequence ID" value="TraesCS1A03G0541000.1.CDS1"/>
    <property type="gene ID" value="TraesCS1A03G0541000"/>
</dbReference>
<dbReference type="Gramene" id="TraesJAG1A03G00097830.1">
    <property type="protein sequence ID" value="TraesJAG1A03G00097830.1.CDS1"/>
    <property type="gene ID" value="TraesJAG1A03G00097830"/>
</dbReference>
<dbReference type="Gramene" id="TraesJUL1A03G00097270.1">
    <property type="protein sequence ID" value="TraesJUL1A03G00097270.1.CDS1"/>
    <property type="gene ID" value="TraesJUL1A03G00097270"/>
</dbReference>
<dbReference type="Gramene" id="TraesKAR1A01G0230670.1">
    <property type="protein sequence ID" value="cds.TraesKAR1A01G0230670.1"/>
    <property type="gene ID" value="TraesKAR1A01G0230670"/>
</dbReference>
<dbReference type="Gramene" id="TraesLAC1A03G00100340.1">
    <property type="protein sequence ID" value="TraesLAC1A03G00100340.1.CDS1"/>
    <property type="gene ID" value="TraesLAC1A03G00100340"/>
</dbReference>
<dbReference type="Gramene" id="TraesLDM1A03G00097970.1">
    <property type="protein sequence ID" value="TraesLDM1A03G00097970.1.CDS1"/>
    <property type="gene ID" value="TraesLDM1A03G00097970"/>
</dbReference>
<dbReference type="Gramene" id="TraesMAC1A03G00099350.1">
    <property type="protein sequence ID" value="TraesMAC1A03G00099350.1.CDS1"/>
    <property type="gene ID" value="TraesMAC1A03G00099350"/>
</dbReference>
<dbReference type="Gramene" id="TraesNOR1A03G00098560.1">
    <property type="protein sequence ID" value="TraesNOR1A03G00098560.1.CDS1"/>
    <property type="gene ID" value="TraesNOR1A03G00098560"/>
</dbReference>
<dbReference type="Gramene" id="TraesPARA_EIv1.0_0051460.1">
    <property type="protein sequence ID" value="TraesPARA_EIv1.0_0051460.1.CDS1"/>
    <property type="gene ID" value="TraesPARA_EIv1.0_0051460"/>
</dbReference>
<dbReference type="Gramene" id="TraesRN1A0100582500.1">
    <property type="protein sequence ID" value="TraesRN1A0100582500.1"/>
    <property type="gene ID" value="TraesRN1A0100582500"/>
</dbReference>
<dbReference type="Gramene" id="TraesROB_scaffold_048024_01G000100.1">
    <property type="protein sequence ID" value="TraesROB_scaffold_048024_01G000100.1"/>
    <property type="gene ID" value="TraesROB_scaffold_048024_01G000100"/>
</dbReference>
<dbReference type="Gramene" id="TraesSTA1A03G00098130.1">
    <property type="protein sequence ID" value="TraesSTA1A03G00098130.1.CDS1"/>
    <property type="gene ID" value="TraesSTA1A03G00098130"/>
</dbReference>
<dbReference type="Gramene" id="TraesSYM1A03G00100910.1">
    <property type="protein sequence ID" value="TraesSYM1A03G00100910.1.CDS1"/>
    <property type="gene ID" value="TraesSYM1A03G00100910"/>
</dbReference>
<dbReference type="Gramene" id="TraesWEE_scaffold_032102_01G000300.1">
    <property type="protein sequence ID" value="TraesWEE_scaffold_032102_01G000300.1"/>
    <property type="gene ID" value="TraesWEE_scaffold_032102_01G000300"/>
</dbReference>
<dbReference type="eggNOG" id="ENOG502S74E">
    <property type="taxonomic scope" value="Eukaryota"/>
</dbReference>
<dbReference type="OMA" id="TCATCAN"/>
<dbReference type="OrthoDB" id="1929463at2759"/>
<dbReference type="Proteomes" id="UP000019116">
    <property type="component" value="Chromosome 1A"/>
</dbReference>
<dbReference type="GO" id="GO:0008270">
    <property type="term" value="F:zinc ion binding"/>
    <property type="evidence" value="ECO:0007669"/>
    <property type="project" value="InterPro"/>
</dbReference>
<dbReference type="InterPro" id="IPR000316">
    <property type="entry name" value="Metallthion_15"/>
</dbReference>
<dbReference type="PANTHER" id="PTHR48198">
    <property type="entry name" value="EC PROTEIN HOMOLOG"/>
    <property type="match status" value="1"/>
</dbReference>
<dbReference type="PANTHER" id="PTHR48198:SF1">
    <property type="entry name" value="METALLOTHIONEIN-LIKE PROTEIN 4A-RELATED"/>
    <property type="match status" value="1"/>
</dbReference>
<dbReference type="Pfam" id="PF02068">
    <property type="entry name" value="Metallothio_PEC"/>
    <property type="match status" value="1"/>
</dbReference>
<dbReference type="PRINTS" id="PR00877">
    <property type="entry name" value="MTPLANTPEC"/>
</dbReference>
<comment type="function">
    <text>Binds 5 molecules of zinc. May have a role in Zn(2+) homeostasis during embryogenesis.</text>
</comment>
<comment type="developmental stage">
    <text>Expressed during embryogenesis.</text>
</comment>
<comment type="induction">
    <text>By abscisic acid (ABA).</text>
</comment>
<comment type="similarity">
    <text evidence="2">Belongs to the metallothionein superfamily. Type 15 family.</text>
</comment>
<evidence type="ECO:0000250" key="1"/>
<evidence type="ECO:0000305" key="2"/>
<protein>
    <recommendedName>
        <fullName>EC protein III</fullName>
    </recommendedName>
    <alternativeName>
        <fullName>Zinc metallothionein class II</fullName>
    </alternativeName>
</protein>